<organism>
    <name type="scientific">Homo sapiens</name>
    <name type="common">Human</name>
    <dbReference type="NCBI Taxonomy" id="9606"/>
    <lineage>
        <taxon>Eukaryota</taxon>
        <taxon>Metazoa</taxon>
        <taxon>Chordata</taxon>
        <taxon>Craniata</taxon>
        <taxon>Vertebrata</taxon>
        <taxon>Euteleostomi</taxon>
        <taxon>Mammalia</taxon>
        <taxon>Eutheria</taxon>
        <taxon>Euarchontoglires</taxon>
        <taxon>Primates</taxon>
        <taxon>Haplorrhini</taxon>
        <taxon>Catarrhini</taxon>
        <taxon>Hominidae</taxon>
        <taxon>Homo</taxon>
    </lineage>
</organism>
<reference key="1">
    <citation type="journal article" date="1994" name="Hum. Genet.">
        <title>A WAGR region gene between PAX-6 and FSHB expressed in fetal brain.</title>
        <authorList>
            <person name="Schwartz F."/>
            <person name="Neve R."/>
            <person name="Eisenman R."/>
            <person name="Gessler M."/>
            <person name="Bruns G."/>
        </authorList>
    </citation>
    <scope>NUCLEOTIDE SEQUENCE [MRNA] (ISOFORM 1)</scope>
</reference>
<reference key="2">
    <citation type="journal article" date="1995" name="Genomics">
        <title>cDNA sequence, genomic organization, and evolutionary conservation of a novel gene from the WAGR region.</title>
        <authorList>
            <person name="Schwartz F."/>
            <person name="Eisenman R."/>
            <person name="Knoll J."/>
            <person name="Gessler M."/>
            <person name="Bruns G."/>
        </authorList>
    </citation>
    <scope>NUCLEOTIDE SEQUENCE [MRNA] (ISOFORM 1)</scope>
</reference>
<reference key="3">
    <citation type="submission" date="2005-03" db="EMBL/GenBank/DDBJ databases">
        <title>Homo sapiens protein coding cDNA.</title>
        <authorList>
            <person name="Totoki Y."/>
            <person name="Toyoda A."/>
            <person name="Takeda T."/>
            <person name="Sakaki Y."/>
            <person name="Tanaka A."/>
            <person name="Yokoyama S."/>
            <person name="Ohara O."/>
            <person name="Nagase T."/>
            <person name="Kikuno R.F."/>
        </authorList>
    </citation>
    <scope>NUCLEOTIDE SEQUENCE [LARGE SCALE MRNA] (ISOFORM 2)</scope>
    <source>
        <tissue>Brain</tissue>
    </source>
</reference>
<reference key="4">
    <citation type="journal article" date="2006" name="Nature">
        <title>Human chromosome 11 DNA sequence and analysis including novel gene identification.</title>
        <authorList>
            <person name="Taylor T.D."/>
            <person name="Noguchi H."/>
            <person name="Totoki Y."/>
            <person name="Toyoda A."/>
            <person name="Kuroki Y."/>
            <person name="Dewar K."/>
            <person name="Lloyd C."/>
            <person name="Itoh T."/>
            <person name="Takeda T."/>
            <person name="Kim D.-W."/>
            <person name="She X."/>
            <person name="Barlow K.F."/>
            <person name="Bloom T."/>
            <person name="Bruford E."/>
            <person name="Chang J.L."/>
            <person name="Cuomo C.A."/>
            <person name="Eichler E."/>
            <person name="FitzGerald M.G."/>
            <person name="Jaffe D.B."/>
            <person name="LaButti K."/>
            <person name="Nicol R."/>
            <person name="Park H.-S."/>
            <person name="Seaman C."/>
            <person name="Sougnez C."/>
            <person name="Yang X."/>
            <person name="Zimmer A.R."/>
            <person name="Zody M.C."/>
            <person name="Birren B.W."/>
            <person name="Nusbaum C."/>
            <person name="Fujiyama A."/>
            <person name="Hattori M."/>
            <person name="Rogers J."/>
            <person name="Lander E.S."/>
            <person name="Sakaki Y."/>
        </authorList>
    </citation>
    <scope>NUCLEOTIDE SEQUENCE [LARGE SCALE GENOMIC DNA]</scope>
</reference>
<reference key="5">
    <citation type="submission" date="2005-09" db="EMBL/GenBank/DDBJ databases">
        <authorList>
            <person name="Mural R.J."/>
            <person name="Istrail S."/>
            <person name="Sutton G.G."/>
            <person name="Florea L."/>
            <person name="Halpern A.L."/>
            <person name="Mobarry C.M."/>
            <person name="Lippert R."/>
            <person name="Walenz B."/>
            <person name="Shatkay H."/>
            <person name="Dew I."/>
            <person name="Miller J.R."/>
            <person name="Flanigan M.J."/>
            <person name="Edwards N.J."/>
            <person name="Bolanos R."/>
            <person name="Fasulo D."/>
            <person name="Halldorsson B.V."/>
            <person name="Hannenhalli S."/>
            <person name="Turner R."/>
            <person name="Yooseph S."/>
            <person name="Lu F."/>
            <person name="Nusskern D.R."/>
            <person name="Shue B.C."/>
            <person name="Zheng X.H."/>
            <person name="Zhong F."/>
            <person name="Delcher A.L."/>
            <person name="Huson D.H."/>
            <person name="Kravitz S.A."/>
            <person name="Mouchard L."/>
            <person name="Reinert K."/>
            <person name="Remington K.A."/>
            <person name="Clark A.G."/>
            <person name="Waterman M.S."/>
            <person name="Eichler E.E."/>
            <person name="Adams M.D."/>
            <person name="Hunkapiller M.W."/>
            <person name="Myers E.W."/>
            <person name="Venter J.C."/>
        </authorList>
    </citation>
    <scope>NUCLEOTIDE SEQUENCE [LARGE SCALE GENOMIC DNA]</scope>
</reference>
<reference key="6">
    <citation type="journal article" date="2004" name="Genome Res.">
        <title>The status, quality, and expansion of the NIH full-length cDNA project: the Mammalian Gene Collection (MGC).</title>
        <authorList>
            <consortium name="The MGC Project Team"/>
        </authorList>
    </citation>
    <scope>NUCLEOTIDE SEQUENCE [LARGE SCALE MRNA] (ISOFORM 1)</scope>
    <source>
        <tissue>Colon</tissue>
        <tissue>Kidney</tissue>
        <tissue>Stomach</tissue>
    </source>
</reference>
<proteinExistence type="evidence at protein level"/>
<feature type="chain" id="PRO_0000053405" description="Metallophosphoesterase MPPED2">
    <location>
        <begin position="1"/>
        <end position="294"/>
    </location>
</feature>
<feature type="binding site" evidence="1">
    <location>
        <position position="65"/>
    </location>
    <ligand>
        <name>Mn(2+)</name>
        <dbReference type="ChEBI" id="CHEBI:29035"/>
        <label>1</label>
    </ligand>
</feature>
<feature type="binding site" evidence="1">
    <location>
        <position position="67"/>
    </location>
    <ligand>
        <name>Mn(2+)</name>
        <dbReference type="ChEBI" id="CHEBI:29035"/>
        <label>1</label>
    </ligand>
</feature>
<feature type="binding site" evidence="1">
    <location>
        <position position="86"/>
    </location>
    <ligand>
        <name>Mn(2+)</name>
        <dbReference type="ChEBI" id="CHEBI:29035"/>
        <label>1</label>
    </ligand>
</feature>
<feature type="binding site" evidence="1">
    <location>
        <position position="86"/>
    </location>
    <ligand>
        <name>Mn(2+)</name>
        <dbReference type="ChEBI" id="CHEBI:29035"/>
        <label>2</label>
    </ligand>
</feature>
<feature type="binding site" evidence="1">
    <location>
        <begin position="117"/>
        <end position="118"/>
    </location>
    <ligand>
        <name>GMP</name>
        <dbReference type="ChEBI" id="CHEBI:58115"/>
    </ligand>
</feature>
<feature type="binding site" evidence="1">
    <location>
        <position position="117"/>
    </location>
    <ligand>
        <name>Mn(2+)</name>
        <dbReference type="ChEBI" id="CHEBI:29035"/>
        <label>2</label>
    </ligand>
</feature>
<feature type="binding site" evidence="1">
    <location>
        <position position="213"/>
    </location>
    <ligand>
        <name>Mn(2+)</name>
        <dbReference type="ChEBI" id="CHEBI:29035"/>
        <label>2</label>
    </ligand>
</feature>
<feature type="binding site" evidence="1">
    <location>
        <begin position="225"/>
        <end position="226"/>
    </location>
    <ligand>
        <name>GMP</name>
        <dbReference type="ChEBI" id="CHEBI:58115"/>
    </ligand>
</feature>
<feature type="binding site" evidence="1">
    <location>
        <begin position="252"/>
        <end position="255"/>
    </location>
    <ligand>
        <name>GMP</name>
        <dbReference type="ChEBI" id="CHEBI:58115"/>
    </ligand>
</feature>
<feature type="binding site" evidence="1">
    <location>
        <position position="254"/>
    </location>
    <ligand>
        <name>Mn(2+)</name>
        <dbReference type="ChEBI" id="CHEBI:29035"/>
        <label>1</label>
    </ligand>
</feature>
<feature type="splice variant" id="VSP_045627" description="In isoform 2." evidence="2">
    <original>GYGIMTDGYTTYINASTCTVSFQPTNPPIIFDLPNPQGS</original>
    <variation>VNPVSISKALRTKICSLPSKTS</variation>
    <location>
        <begin position="256"/>
        <end position="294"/>
    </location>
</feature>
<feature type="sequence variant" id="VAR_052487" description="In dbSNP:rs11556749.">
    <original>H</original>
    <variation>R</variation>
    <location>
        <position position="67"/>
    </location>
</feature>
<comment type="function">
    <text evidence="1">Displays low metallophosphoesterase activity (in vitro). May play a role in the development of the nervous system.</text>
</comment>
<comment type="cofactor">
    <cofactor evidence="1">
        <name>Mn(2+)</name>
        <dbReference type="ChEBI" id="CHEBI:29035"/>
    </cofactor>
    <cofactor evidence="1">
        <name>Co(2+)</name>
        <dbReference type="ChEBI" id="CHEBI:48828"/>
    </cofactor>
</comment>
<comment type="activity regulation">
    <text evidence="1">Inhibited by nmolar levels of AMP and GMP.</text>
</comment>
<comment type="subunit">
    <text evidence="1">Homodimer.</text>
</comment>
<comment type="interaction">
    <interactant intactId="EBI-2350461">
        <id>Q15777</id>
    </interactant>
    <interactant intactId="EBI-15105944">
        <id>Q9NWD9</id>
        <label>BEX4</label>
    </interactant>
    <organismsDiffer>false</organismsDiffer>
    <experiments>3</experiments>
</comment>
<comment type="interaction">
    <interactant intactId="EBI-2350461">
        <id>Q15777</id>
    </interactant>
    <interactant intactId="EBI-10196469">
        <id>Q8TC20</id>
        <label>CAGE1</label>
    </interactant>
    <organismsDiffer>false</organismsDiffer>
    <experiments>3</experiments>
</comment>
<comment type="interaction">
    <interactant intactId="EBI-2350461">
        <id>Q15777</id>
    </interactant>
    <interactant intactId="EBI-11522698">
        <id>Q8TC20-4</id>
        <label>CAGE1</label>
    </interactant>
    <organismsDiffer>false</organismsDiffer>
    <experiments>3</experiments>
</comment>
<comment type="interaction">
    <interactant intactId="EBI-2350461">
        <id>Q15777</id>
    </interactant>
    <interactant intactId="EBI-10237116">
        <id>Q5TYM5</id>
        <label>FAM72A</label>
    </interactant>
    <organismsDiffer>false</organismsDiffer>
    <experiments>3</experiments>
</comment>
<comment type="interaction">
    <interactant intactId="EBI-2350461">
        <id>Q15777</id>
    </interactant>
    <interactant intactId="EBI-10961706">
        <id>Q96ED9-2</id>
        <label>HOOK2</label>
    </interactant>
    <organismsDiffer>false</organismsDiffer>
    <experiments>3</experiments>
</comment>
<comment type="interaction">
    <interactant intactId="EBI-2350461">
        <id>Q15777</id>
    </interactant>
    <interactant intactId="EBI-12516603">
        <id>Q8WWY6</id>
        <label>MBD3L1</label>
    </interactant>
    <organismsDiffer>false</organismsDiffer>
    <experiments>3</experiments>
</comment>
<comment type="interaction">
    <interactant intactId="EBI-2350461">
        <id>Q15777</id>
    </interactant>
    <interactant intactId="EBI-1042703">
        <id>Q8N1F7</id>
        <label>NUP93</label>
    </interactant>
    <organismsDiffer>false</organismsDiffer>
    <experiments>3</experiments>
</comment>
<comment type="interaction">
    <interactant intactId="EBI-2350461">
        <id>Q15777</id>
    </interactant>
    <interactant intactId="EBI-696895">
        <id>Q9Y244</id>
        <label>POMP</label>
    </interactant>
    <organismsDiffer>false</organismsDiffer>
    <experiments>3</experiments>
</comment>
<comment type="interaction">
    <interactant intactId="EBI-2350461">
        <id>Q15777</id>
    </interactant>
    <interactant intactId="EBI-10265323">
        <id>Q8N443</id>
        <label>RIBC1</label>
    </interactant>
    <organismsDiffer>false</organismsDiffer>
    <experiments>3</experiments>
</comment>
<comment type="interaction">
    <interactant intactId="EBI-2350461">
        <id>Q15777</id>
    </interactant>
    <interactant intactId="EBI-712405">
        <id>P48443</id>
        <label>RXRG</label>
    </interactant>
    <organismsDiffer>false</organismsDiffer>
    <experiments>6</experiments>
</comment>
<comment type="interaction">
    <interactant intactId="EBI-2350461">
        <id>Q15777</id>
    </interactant>
    <interactant intactId="EBI-358993">
        <id>Q15645</id>
        <label>TRIP13</label>
    </interactant>
    <organismsDiffer>false</organismsDiffer>
    <experiments>8</experiments>
</comment>
<comment type="interaction">
    <interactant intactId="EBI-2350461">
        <id>Q15777</id>
    </interactant>
    <interactant intactId="EBI-2107455">
        <id>Q08AM6</id>
        <label>VAC14</label>
    </interactant>
    <organismsDiffer>false</organismsDiffer>
    <experiments>6</experiments>
</comment>
<comment type="alternative products">
    <event type="alternative splicing"/>
    <isoform>
        <id>Q15777-1</id>
        <name>1</name>
        <sequence type="displayed"/>
    </isoform>
    <isoform>
        <id>Q15777-2</id>
        <name>2</name>
        <sequence type="described" ref="VSP_045627"/>
    </isoform>
</comment>
<comment type="tissue specificity">
    <text>Expressed predominantly in fetal brain.</text>
</comment>
<comment type="similarity">
    <text evidence="3">Belongs to the UPF0046 family.</text>
</comment>
<comment type="sequence caution" evidence="3">
    <conflict type="erroneous initiation">
        <sequence resource="EMBL-CDS" id="BAD92400"/>
    </conflict>
    <text>Extended N-terminus.</text>
</comment>
<protein>
    <recommendedName>
        <fullName>Metallophosphoesterase MPPED2</fullName>
        <ecNumber evidence="1">3.1.-.-</ecNumber>
    </recommendedName>
    <alternativeName>
        <fullName>Fetal brain protein 239</fullName>
        <shortName>239FB</shortName>
    </alternativeName>
    <alternativeName>
        <fullName>Metallophosphoesterase domain-containing protein 2</fullName>
    </alternativeName>
</protein>
<evidence type="ECO:0000250" key="1">
    <source>
        <dbReference type="UniProtKB" id="B1WBP0"/>
    </source>
</evidence>
<evidence type="ECO:0000303" key="2">
    <source ref="3"/>
</evidence>
<evidence type="ECO:0000305" key="3"/>
<keyword id="KW-0025">Alternative splicing</keyword>
<keyword id="KW-0170">Cobalt</keyword>
<keyword id="KW-0378">Hydrolase</keyword>
<keyword id="KW-0464">Manganese</keyword>
<keyword id="KW-0479">Metal-binding</keyword>
<keyword id="KW-0547">Nucleotide-binding</keyword>
<keyword id="KW-1267">Proteomics identification</keyword>
<keyword id="KW-1185">Reference proteome</keyword>
<accession>Q15777</accession>
<accession>D3DQZ5</accession>
<accession>E9PB10</accession>
<accession>Q59GE6</accession>
<dbReference type="EC" id="3.1.-.-" evidence="1"/>
<dbReference type="EMBL" id="U57911">
    <property type="protein sequence ID" value="AAC50564.1"/>
    <property type="molecule type" value="mRNA"/>
</dbReference>
<dbReference type="EMBL" id="AB209163">
    <property type="protein sequence ID" value="BAD92400.1"/>
    <property type="status" value="ALT_INIT"/>
    <property type="molecule type" value="mRNA"/>
</dbReference>
<dbReference type="EMBL" id="AL136088">
    <property type="status" value="NOT_ANNOTATED_CDS"/>
    <property type="molecule type" value="Genomic_DNA"/>
</dbReference>
<dbReference type="EMBL" id="AL353699">
    <property type="status" value="NOT_ANNOTATED_CDS"/>
    <property type="molecule type" value="Genomic_DNA"/>
</dbReference>
<dbReference type="EMBL" id="AL356240">
    <property type="status" value="NOT_ANNOTATED_CDS"/>
    <property type="molecule type" value="Genomic_DNA"/>
</dbReference>
<dbReference type="EMBL" id="CH471064">
    <property type="protein sequence ID" value="EAW68256.1"/>
    <property type="molecule type" value="Genomic_DNA"/>
</dbReference>
<dbReference type="EMBL" id="CH471064">
    <property type="protein sequence ID" value="EAW68257.1"/>
    <property type="molecule type" value="Genomic_DNA"/>
</dbReference>
<dbReference type="EMBL" id="BC031582">
    <property type="protein sequence ID" value="AAH31582.1"/>
    <property type="molecule type" value="mRNA"/>
</dbReference>
<dbReference type="CCDS" id="CCDS44560.1">
    <molecule id="Q15777-2"/>
</dbReference>
<dbReference type="CCDS" id="CCDS7870.1">
    <molecule id="Q15777-1"/>
</dbReference>
<dbReference type="RefSeq" id="NP_001138871.1">
    <molecule id="Q15777-2"/>
    <property type="nucleotide sequence ID" value="NM_001145399.3"/>
</dbReference>
<dbReference type="RefSeq" id="NP_001364881.1">
    <molecule id="Q15777-1"/>
    <property type="nucleotide sequence ID" value="NM_001377952.1"/>
</dbReference>
<dbReference type="RefSeq" id="NP_001364882.1">
    <molecule id="Q15777-1"/>
    <property type="nucleotide sequence ID" value="NM_001377953.1"/>
</dbReference>
<dbReference type="RefSeq" id="NP_001364883.1">
    <molecule id="Q15777-1"/>
    <property type="nucleotide sequence ID" value="NM_001377954.1"/>
</dbReference>
<dbReference type="RefSeq" id="NP_001364884.1">
    <molecule id="Q15777-1"/>
    <property type="nucleotide sequence ID" value="NM_001377955.1"/>
</dbReference>
<dbReference type="RefSeq" id="NP_001364885.1">
    <molecule id="Q15777-2"/>
    <property type="nucleotide sequence ID" value="NM_001377956.1"/>
</dbReference>
<dbReference type="RefSeq" id="NP_001575.1">
    <molecule id="Q15777-1"/>
    <property type="nucleotide sequence ID" value="NM_001584.3"/>
</dbReference>
<dbReference type="RefSeq" id="XP_005253167.1">
    <property type="nucleotide sequence ID" value="XM_005253110.3"/>
</dbReference>
<dbReference type="RefSeq" id="XP_005253168.1">
    <molecule id="Q15777-1"/>
    <property type="nucleotide sequence ID" value="XM_005253111.3"/>
</dbReference>
<dbReference type="RefSeq" id="XP_005253169.1">
    <property type="nucleotide sequence ID" value="XM_005253112.1"/>
</dbReference>
<dbReference type="RefSeq" id="XP_016873721.1">
    <property type="nucleotide sequence ID" value="XM_017018232.1"/>
</dbReference>
<dbReference type="RefSeq" id="XP_024304444.1">
    <molecule id="Q15777-1"/>
    <property type="nucleotide sequence ID" value="XM_024448676.2"/>
</dbReference>
<dbReference type="RefSeq" id="XP_047283480.1">
    <molecule id="Q15777-1"/>
    <property type="nucleotide sequence ID" value="XM_047427524.1"/>
</dbReference>
<dbReference type="RefSeq" id="XP_047283481.1">
    <molecule id="Q15777-1"/>
    <property type="nucleotide sequence ID" value="XM_047427525.1"/>
</dbReference>
<dbReference type="RefSeq" id="XP_054225797.1">
    <molecule id="Q15777-1"/>
    <property type="nucleotide sequence ID" value="XM_054369822.1"/>
</dbReference>
<dbReference type="RefSeq" id="XP_054225798.1">
    <molecule id="Q15777-1"/>
    <property type="nucleotide sequence ID" value="XM_054369823.1"/>
</dbReference>
<dbReference type="RefSeq" id="XP_054225799.1">
    <molecule id="Q15777-1"/>
    <property type="nucleotide sequence ID" value="XM_054369824.1"/>
</dbReference>
<dbReference type="RefSeq" id="XP_054225800.1">
    <molecule id="Q15777-1"/>
    <property type="nucleotide sequence ID" value="XM_054369825.1"/>
</dbReference>
<dbReference type="SMR" id="Q15777"/>
<dbReference type="BioGRID" id="107202">
    <property type="interactions" value="21"/>
</dbReference>
<dbReference type="FunCoup" id="Q15777">
    <property type="interactions" value="221"/>
</dbReference>
<dbReference type="IntAct" id="Q15777">
    <property type="interactions" value="18"/>
</dbReference>
<dbReference type="MINT" id="Q15777"/>
<dbReference type="STRING" id="9606.ENSP00000350833"/>
<dbReference type="PhosphoSitePlus" id="Q15777"/>
<dbReference type="BioMuta" id="MPPED2"/>
<dbReference type="DMDM" id="3023214"/>
<dbReference type="jPOST" id="Q15777"/>
<dbReference type="MassIVE" id="Q15777"/>
<dbReference type="PaxDb" id="9606-ENSP00000350833"/>
<dbReference type="PeptideAtlas" id="Q15777"/>
<dbReference type="ProteomicsDB" id="19118"/>
<dbReference type="ProteomicsDB" id="60757">
    <molecule id="Q15777-1"/>
</dbReference>
<dbReference type="Pumba" id="Q15777"/>
<dbReference type="Antibodypedia" id="12780">
    <property type="antibodies" value="191 antibodies from 23 providers"/>
</dbReference>
<dbReference type="DNASU" id="744"/>
<dbReference type="Ensembl" id="ENST00000358117.10">
    <molecule id="Q15777-1"/>
    <property type="protein sequence ID" value="ENSP00000350833.4"/>
    <property type="gene ID" value="ENSG00000066382.17"/>
</dbReference>
<dbReference type="Ensembl" id="ENST00000448418.6">
    <molecule id="Q15777-2"/>
    <property type="protein sequence ID" value="ENSP00000388258.2"/>
    <property type="gene ID" value="ENSG00000066382.17"/>
</dbReference>
<dbReference type="GeneID" id="744"/>
<dbReference type="KEGG" id="hsa:744"/>
<dbReference type="MANE-Select" id="ENST00000358117.10">
    <property type="protein sequence ID" value="ENSP00000350833.4"/>
    <property type="RefSeq nucleotide sequence ID" value="NM_001584.3"/>
    <property type="RefSeq protein sequence ID" value="NP_001575.1"/>
</dbReference>
<dbReference type="UCSC" id="uc001msq.4">
    <molecule id="Q15777-1"/>
    <property type="organism name" value="human"/>
</dbReference>
<dbReference type="AGR" id="HGNC:1180"/>
<dbReference type="CTD" id="744"/>
<dbReference type="DisGeNET" id="744"/>
<dbReference type="GeneCards" id="MPPED2"/>
<dbReference type="HGNC" id="HGNC:1180">
    <property type="gene designation" value="MPPED2"/>
</dbReference>
<dbReference type="HPA" id="ENSG00000066382">
    <property type="expression patterns" value="Tissue enhanced (cervix, thyroid gland)"/>
</dbReference>
<dbReference type="MIM" id="600911">
    <property type="type" value="gene"/>
</dbReference>
<dbReference type="neXtProt" id="NX_Q15777"/>
<dbReference type="OpenTargets" id="ENSG00000066382"/>
<dbReference type="PharmGKB" id="PA25499"/>
<dbReference type="VEuPathDB" id="HostDB:ENSG00000066382"/>
<dbReference type="eggNOG" id="KOG3947">
    <property type="taxonomic scope" value="Eukaryota"/>
</dbReference>
<dbReference type="GeneTree" id="ENSGT00390000007681"/>
<dbReference type="HOGENOM" id="CLU_041441_1_0_1"/>
<dbReference type="InParanoid" id="Q15777"/>
<dbReference type="OMA" id="AIKFINC"/>
<dbReference type="OrthoDB" id="630188at2759"/>
<dbReference type="PAN-GO" id="Q15777">
    <property type="GO annotations" value="0 GO annotations based on evolutionary models"/>
</dbReference>
<dbReference type="PhylomeDB" id="Q15777"/>
<dbReference type="TreeFam" id="TF314305"/>
<dbReference type="PathwayCommons" id="Q15777"/>
<dbReference type="SignaLink" id="Q15777"/>
<dbReference type="BioGRID-ORCS" id="744">
    <property type="hits" value="14 hits in 1145 CRISPR screens"/>
</dbReference>
<dbReference type="ChiTaRS" id="MPPED2">
    <property type="organism name" value="human"/>
</dbReference>
<dbReference type="GenomeRNAi" id="744"/>
<dbReference type="Pharos" id="Q15777">
    <property type="development level" value="Tbio"/>
</dbReference>
<dbReference type="PRO" id="PR:Q15777"/>
<dbReference type="Proteomes" id="UP000005640">
    <property type="component" value="Chromosome 11"/>
</dbReference>
<dbReference type="RNAct" id="Q15777">
    <property type="molecule type" value="protein"/>
</dbReference>
<dbReference type="Bgee" id="ENSG00000066382">
    <property type="expression patterns" value="Expressed in ventricular zone and 180 other cell types or tissues"/>
</dbReference>
<dbReference type="ExpressionAtlas" id="Q15777">
    <property type="expression patterns" value="baseline and differential"/>
</dbReference>
<dbReference type="GO" id="GO:0016208">
    <property type="term" value="F:AMP binding"/>
    <property type="evidence" value="ECO:0000250"/>
    <property type="project" value="UniProtKB"/>
</dbReference>
<dbReference type="GO" id="GO:0019002">
    <property type="term" value="F:GMP binding"/>
    <property type="evidence" value="ECO:0000250"/>
    <property type="project" value="UniProtKB"/>
</dbReference>
<dbReference type="GO" id="GO:0030145">
    <property type="term" value="F:manganese ion binding"/>
    <property type="evidence" value="ECO:0000250"/>
    <property type="project" value="UniProtKB"/>
</dbReference>
<dbReference type="GO" id="GO:0008081">
    <property type="term" value="F:phosphoric diester hydrolase activity"/>
    <property type="evidence" value="ECO:0000250"/>
    <property type="project" value="UniProtKB"/>
</dbReference>
<dbReference type="CDD" id="cd07379">
    <property type="entry name" value="MPP_239FB"/>
    <property type="match status" value="1"/>
</dbReference>
<dbReference type="FunFam" id="3.60.21.10:FF:000023">
    <property type="entry name" value="Metallophosphoesterase mpped2"/>
    <property type="match status" value="1"/>
</dbReference>
<dbReference type="Gene3D" id="3.60.21.10">
    <property type="match status" value="1"/>
</dbReference>
<dbReference type="InterPro" id="IPR024201">
    <property type="entry name" value="Calcineurin-like_Pesterase"/>
</dbReference>
<dbReference type="InterPro" id="IPR004843">
    <property type="entry name" value="Calcineurin-like_PHP_ApaH"/>
</dbReference>
<dbReference type="InterPro" id="IPR029052">
    <property type="entry name" value="Metallo-depent_PP-like"/>
</dbReference>
<dbReference type="InterPro" id="IPR051693">
    <property type="entry name" value="UPF0046_metallophosphoest"/>
</dbReference>
<dbReference type="PANTHER" id="PTHR12905">
    <property type="entry name" value="METALLOPHOSPHOESTERASE"/>
    <property type="match status" value="1"/>
</dbReference>
<dbReference type="PANTHER" id="PTHR12905:SF13">
    <property type="entry name" value="METALLOPHOSPHOESTERASE MPPED2"/>
    <property type="match status" value="1"/>
</dbReference>
<dbReference type="Pfam" id="PF00149">
    <property type="entry name" value="Metallophos"/>
    <property type="match status" value="1"/>
</dbReference>
<dbReference type="PIRSF" id="PIRSF035808">
    <property type="entry name" value="Pdiesterase_Brain_239"/>
    <property type="match status" value="1"/>
</dbReference>
<dbReference type="SUPFAM" id="SSF56300">
    <property type="entry name" value="Metallo-dependent phosphatases"/>
    <property type="match status" value="1"/>
</dbReference>
<gene>
    <name type="primary">MPPED2</name>
    <name type="synonym">C11orf8</name>
    <name type="synonym">FAM1B</name>
</gene>
<sequence>MAHGIPSQGKVTITVDEYSSNPTQAFTHYNINQSRFQPPHVHMVDPIPYDTPKPAGHTRFVCISDTHSRTDGIQMPYGDILLHTGDFTELGLPSEVKKFNDWLGNLPYEYKIVIAGNHELTFDKEFMADLVKQDYYRFPSVSKLKPEDFDNVQSLLTNSIYLQDSEVTVKGFRIYGAPWTPWFNGWGFNLPRGQSLLDKWNLIPEGIDILMTHGPPLGFRDWVPKELQRVGCVELLNTVQRRVRPKLHVFGGIHEGYGIMTDGYTTYINASTCTVSFQPTNPPIIFDLPNPQGS</sequence>
<name>MPPD2_HUMAN</name>